<evidence type="ECO:0000250" key="1">
    <source>
        <dbReference type="UniProtKB" id="Q05871"/>
    </source>
</evidence>
<evidence type="ECO:0000269" key="2">
    <source>
    </source>
</evidence>
<evidence type="ECO:0000269" key="3">
    <source>
    </source>
</evidence>
<evidence type="ECO:0000269" key="4">
    <source>
    </source>
</evidence>
<evidence type="ECO:0000269" key="5">
    <source>
    </source>
</evidence>
<evidence type="ECO:0000269" key="6">
    <source>
    </source>
</evidence>
<evidence type="ECO:0000269" key="7">
    <source>
    </source>
</evidence>
<evidence type="ECO:0000303" key="8">
    <source>
    </source>
</evidence>
<evidence type="ECO:0000305" key="9"/>
<name>DCI1_YEAST</name>
<accession>Q08558</accession>
<accession>D6W2N6</accession>
<keyword id="KW-0276">Fatty acid metabolism</keyword>
<keyword id="KW-0413">Isomerase</keyword>
<keyword id="KW-0443">Lipid metabolism</keyword>
<keyword id="KW-0576">Peroxisome</keyword>
<keyword id="KW-1185">Reference proteome</keyword>
<organism>
    <name type="scientific">Saccharomyces cerevisiae (strain ATCC 204508 / S288c)</name>
    <name type="common">Baker's yeast</name>
    <dbReference type="NCBI Taxonomy" id="559292"/>
    <lineage>
        <taxon>Eukaryota</taxon>
        <taxon>Fungi</taxon>
        <taxon>Dikarya</taxon>
        <taxon>Ascomycota</taxon>
        <taxon>Saccharomycotina</taxon>
        <taxon>Saccharomycetes</taxon>
        <taxon>Saccharomycetales</taxon>
        <taxon>Saccharomycetaceae</taxon>
        <taxon>Saccharomyces</taxon>
    </lineage>
</organism>
<protein>
    <recommendedName>
        <fullName evidence="8">Delta(3,5)-Delta(2,4)-dienoyl-CoA isomerase</fullName>
        <ecNumber evidence="3">5.3.3.21</ecNumber>
    </recommendedName>
    <alternativeName>
        <fullName evidence="8">Peroxisomal di-isomerase DCI1</fullName>
    </alternativeName>
</protein>
<feature type="chain" id="PRO_0000232996" description="Delta(3,5)-Delta(2,4)-dienoyl-CoA isomerase">
    <location>
        <begin position="1"/>
        <end position="271"/>
    </location>
</feature>
<feature type="short sequence motif" description="Peroxisome targeting signal (PTS1)" evidence="4 5">
    <location>
        <begin position="269"/>
        <end position="271"/>
    </location>
</feature>
<feature type="active site" description="Proton donor/acceptor" evidence="1">
    <location>
        <position position="152"/>
    </location>
</feature>
<feature type="binding site" evidence="1">
    <location>
        <begin position="62"/>
        <end position="66"/>
    </location>
    <ligand>
        <name>substrate</name>
    </ligand>
</feature>
<feature type="binding site" evidence="1">
    <location>
        <position position="120"/>
    </location>
    <ligand>
        <name>substrate</name>
    </ligand>
</feature>
<proteinExistence type="evidence at protein level"/>
<dbReference type="EC" id="5.3.3.21" evidence="3"/>
<dbReference type="EMBL" id="Z75088">
    <property type="protein sequence ID" value="CAA99389.1"/>
    <property type="molecule type" value="Genomic_DNA"/>
</dbReference>
<dbReference type="EMBL" id="AY558432">
    <property type="protein sequence ID" value="AAS56758.1"/>
    <property type="molecule type" value="Genomic_DNA"/>
</dbReference>
<dbReference type="EMBL" id="BK006948">
    <property type="protein sequence ID" value="DAA10952.1"/>
    <property type="molecule type" value="Genomic_DNA"/>
</dbReference>
<dbReference type="PIR" id="S67072">
    <property type="entry name" value="S67072"/>
</dbReference>
<dbReference type="RefSeq" id="NP_014823.3">
    <property type="nucleotide sequence ID" value="NM_001183599.3"/>
</dbReference>
<dbReference type="SMR" id="Q08558"/>
<dbReference type="BioGRID" id="34575">
    <property type="interactions" value="70"/>
</dbReference>
<dbReference type="DIP" id="DIP-4132N"/>
<dbReference type="FunCoup" id="Q08558">
    <property type="interactions" value="224"/>
</dbReference>
<dbReference type="IntAct" id="Q08558">
    <property type="interactions" value="3"/>
</dbReference>
<dbReference type="MINT" id="Q08558"/>
<dbReference type="STRING" id="4932.YOR180C"/>
<dbReference type="PaxDb" id="4932-YOR180C"/>
<dbReference type="PeptideAtlas" id="Q08558"/>
<dbReference type="EnsemblFungi" id="YOR180C_mRNA">
    <property type="protein sequence ID" value="YOR180C"/>
    <property type="gene ID" value="YOR180C"/>
</dbReference>
<dbReference type="GeneID" id="854352"/>
<dbReference type="KEGG" id="sce:YOR180C"/>
<dbReference type="AGR" id="SGD:S000005706"/>
<dbReference type="SGD" id="S000005706">
    <property type="gene designation" value="DCI1"/>
</dbReference>
<dbReference type="VEuPathDB" id="FungiDB:YOR180C"/>
<dbReference type="eggNOG" id="KOG0016">
    <property type="taxonomic scope" value="Eukaryota"/>
</dbReference>
<dbReference type="GeneTree" id="ENSGT00940000173631"/>
<dbReference type="HOGENOM" id="CLU_009834_6_2_1"/>
<dbReference type="InParanoid" id="Q08558"/>
<dbReference type="OMA" id="CTPETYL"/>
<dbReference type="OrthoDB" id="2018133at2759"/>
<dbReference type="BioCyc" id="MetaCyc:YOR180C-MONOMER"/>
<dbReference type="BioCyc" id="YEAST:YOR180C-MONOMER"/>
<dbReference type="UniPathway" id="UPA00659"/>
<dbReference type="BioGRID-ORCS" id="854352">
    <property type="hits" value="0 hits in 10 CRISPR screens"/>
</dbReference>
<dbReference type="PRO" id="PR:Q08558"/>
<dbReference type="Proteomes" id="UP000002311">
    <property type="component" value="Chromosome XV"/>
</dbReference>
<dbReference type="RNAct" id="Q08558">
    <property type="molecule type" value="protein"/>
</dbReference>
<dbReference type="GO" id="GO:0005737">
    <property type="term" value="C:cytoplasm"/>
    <property type="evidence" value="ECO:0007005"/>
    <property type="project" value="SGD"/>
</dbReference>
<dbReference type="GO" id="GO:0005782">
    <property type="term" value="C:peroxisomal matrix"/>
    <property type="evidence" value="ECO:0000314"/>
    <property type="project" value="SGD"/>
</dbReference>
<dbReference type="GO" id="GO:0004165">
    <property type="term" value="F:delta(3)-delta(2)-enoyl-CoA isomerase activity"/>
    <property type="evidence" value="ECO:0000314"/>
    <property type="project" value="SGD"/>
</dbReference>
<dbReference type="GO" id="GO:0051750">
    <property type="term" value="F:delta(3,5)-delta(2,4)-dienoyl-CoA isomerase activity"/>
    <property type="evidence" value="ECO:0007669"/>
    <property type="project" value="RHEA"/>
</dbReference>
<dbReference type="GO" id="GO:0006635">
    <property type="term" value="P:fatty acid beta-oxidation"/>
    <property type="evidence" value="ECO:0000315"/>
    <property type="project" value="SGD"/>
</dbReference>
<dbReference type="CDD" id="cd06558">
    <property type="entry name" value="crotonase-like"/>
    <property type="match status" value="1"/>
</dbReference>
<dbReference type="FunFam" id="3.90.226.10:FF:000114">
    <property type="entry name" value="DCI1p Peroxisomal protein"/>
    <property type="match status" value="1"/>
</dbReference>
<dbReference type="Gene3D" id="3.90.226.10">
    <property type="entry name" value="2-enoyl-CoA Hydratase, Chain A, domain 1"/>
    <property type="match status" value="1"/>
</dbReference>
<dbReference type="InterPro" id="IPR029045">
    <property type="entry name" value="ClpP/crotonase-like_dom_sf"/>
</dbReference>
<dbReference type="InterPro" id="IPR051053">
    <property type="entry name" value="ECH/Chromodomain_protein"/>
</dbReference>
<dbReference type="InterPro" id="IPR001753">
    <property type="entry name" value="Enoyl-CoA_hydra/iso"/>
</dbReference>
<dbReference type="PANTHER" id="PTHR43684">
    <property type="match status" value="1"/>
</dbReference>
<dbReference type="PANTHER" id="PTHR43684:SF1">
    <property type="entry name" value="ENOYL-COA DELTA ISOMERASE 2"/>
    <property type="match status" value="1"/>
</dbReference>
<dbReference type="Pfam" id="PF00378">
    <property type="entry name" value="ECH_1"/>
    <property type="match status" value="1"/>
</dbReference>
<dbReference type="SUPFAM" id="SSF52096">
    <property type="entry name" value="ClpP/crotonase"/>
    <property type="match status" value="1"/>
</dbReference>
<comment type="function">
    <text evidence="2 3 5">Peroxisomal di-isomerase that is involved in fatty acid metabolism enzyme by converting 3,5-dienoyl-CoAs to the corresponding 2,4-dienoyl-CoAs (PubMed:10381339, PubMed:10455114). Required for ECI1 to be located to the peroxisome (PubMed:10381339, PubMed:11302517).</text>
</comment>
<comment type="catalytic activity">
    <reaction evidence="3">
        <text>a (3E,5Z)-dienoyl-CoA = a (2E,4E)-(5,6-saturated)-dienoyl-CoA</text>
        <dbReference type="Rhea" id="RHEA:45240"/>
        <dbReference type="ChEBI" id="CHEBI:85110"/>
        <dbReference type="ChEBI" id="CHEBI:85111"/>
        <dbReference type="EC" id="5.3.3.21"/>
    </reaction>
    <physiologicalReaction direction="left-to-right" evidence="3">
        <dbReference type="Rhea" id="RHEA:45241"/>
    </physiologicalReaction>
</comment>
<comment type="pathway">
    <text evidence="3">Lipid metabolism; fatty acid beta-oxidation.</text>
</comment>
<comment type="subunit">
    <text evidence="2">Interacts with ECI1.</text>
</comment>
<comment type="subcellular location">
    <subcellularLocation>
        <location evidence="2 3 4">Peroxisome</location>
    </subcellularLocation>
</comment>
<comment type="induction">
    <text evidence="3 4 6 7">By oleate, through the binding of the OAF1-PIP2 transcriptional activator complex to its promoter ORE element. Expression is also induced during ammonia pulses in yeast colonies, at the beginning of detectable ammonia production.</text>
</comment>
<comment type="similarity">
    <text evidence="9">Belongs to the enoyl-CoA hydratase/isomerase family.</text>
</comment>
<reference key="1">
    <citation type="journal article" date="1997" name="Nature">
        <title>The nucleotide sequence of Saccharomyces cerevisiae chromosome XV.</title>
        <authorList>
            <person name="Dujon B."/>
            <person name="Albermann K."/>
            <person name="Aldea M."/>
            <person name="Alexandraki D."/>
            <person name="Ansorge W."/>
            <person name="Arino J."/>
            <person name="Benes V."/>
            <person name="Bohn C."/>
            <person name="Bolotin-Fukuhara M."/>
            <person name="Bordonne R."/>
            <person name="Boyer J."/>
            <person name="Camasses A."/>
            <person name="Casamayor A."/>
            <person name="Casas C."/>
            <person name="Cheret G."/>
            <person name="Cziepluch C."/>
            <person name="Daignan-Fornier B."/>
            <person name="Dang V.-D."/>
            <person name="de Haan M."/>
            <person name="Delius H."/>
            <person name="Durand P."/>
            <person name="Fairhead C."/>
            <person name="Feldmann H."/>
            <person name="Gaillon L."/>
            <person name="Galisson F."/>
            <person name="Gamo F.-J."/>
            <person name="Gancedo C."/>
            <person name="Goffeau A."/>
            <person name="Goulding S.E."/>
            <person name="Grivell L.A."/>
            <person name="Habbig B."/>
            <person name="Hand N.J."/>
            <person name="Hani J."/>
            <person name="Hattenhorst U."/>
            <person name="Hebling U."/>
            <person name="Hernando Y."/>
            <person name="Herrero E."/>
            <person name="Heumann K."/>
            <person name="Hiesel R."/>
            <person name="Hilger F."/>
            <person name="Hofmann B."/>
            <person name="Hollenberg C.P."/>
            <person name="Hughes B."/>
            <person name="Jauniaux J.-C."/>
            <person name="Kalogeropoulos A."/>
            <person name="Katsoulou C."/>
            <person name="Kordes E."/>
            <person name="Lafuente M.J."/>
            <person name="Landt O."/>
            <person name="Louis E.J."/>
            <person name="Maarse A.C."/>
            <person name="Madania A."/>
            <person name="Mannhaupt G."/>
            <person name="Marck C."/>
            <person name="Martin R.P."/>
            <person name="Mewes H.-W."/>
            <person name="Michaux G."/>
            <person name="Paces V."/>
            <person name="Parle-McDermott A.G."/>
            <person name="Pearson B.M."/>
            <person name="Perrin A."/>
            <person name="Pettersson B."/>
            <person name="Poch O."/>
            <person name="Pohl T.M."/>
            <person name="Poirey R."/>
            <person name="Portetelle D."/>
            <person name="Pujol A."/>
            <person name="Purnelle B."/>
            <person name="Ramezani Rad M."/>
            <person name="Rechmann S."/>
            <person name="Schwager C."/>
            <person name="Schweizer M."/>
            <person name="Sor F."/>
            <person name="Sterky F."/>
            <person name="Tarassov I.A."/>
            <person name="Teodoru C."/>
            <person name="Tettelin H."/>
            <person name="Thierry A."/>
            <person name="Tobiasch E."/>
            <person name="Tzermia M."/>
            <person name="Uhlen M."/>
            <person name="Unseld M."/>
            <person name="Valens M."/>
            <person name="Vandenbol M."/>
            <person name="Vetter I."/>
            <person name="Vlcek C."/>
            <person name="Voet M."/>
            <person name="Volckaert G."/>
            <person name="Voss H."/>
            <person name="Wambutt R."/>
            <person name="Wedler H."/>
            <person name="Wiemann S."/>
            <person name="Winsor B."/>
            <person name="Wolfe K.H."/>
            <person name="Zollner A."/>
            <person name="Zumstein E."/>
            <person name="Kleine K."/>
        </authorList>
    </citation>
    <scope>NUCLEOTIDE SEQUENCE [LARGE SCALE GENOMIC DNA]</scope>
    <source>
        <strain>ATCC 204508 / S288c</strain>
    </source>
</reference>
<reference key="2">
    <citation type="journal article" date="2014" name="G3 (Bethesda)">
        <title>The reference genome sequence of Saccharomyces cerevisiae: Then and now.</title>
        <authorList>
            <person name="Engel S.R."/>
            <person name="Dietrich F.S."/>
            <person name="Fisk D.G."/>
            <person name="Binkley G."/>
            <person name="Balakrishnan R."/>
            <person name="Costanzo M.C."/>
            <person name="Dwight S.S."/>
            <person name="Hitz B.C."/>
            <person name="Karra K."/>
            <person name="Nash R.S."/>
            <person name="Weng S."/>
            <person name="Wong E.D."/>
            <person name="Lloyd P."/>
            <person name="Skrzypek M.S."/>
            <person name="Miyasato S.R."/>
            <person name="Simison M."/>
            <person name="Cherry J.M."/>
        </authorList>
    </citation>
    <scope>GENOME REANNOTATION</scope>
    <source>
        <strain>ATCC 204508 / S288c</strain>
    </source>
</reference>
<reference key="3">
    <citation type="journal article" date="2007" name="Genome Res.">
        <title>Approaching a complete repository of sequence-verified protein-encoding clones for Saccharomyces cerevisiae.</title>
        <authorList>
            <person name="Hu Y."/>
            <person name="Rolfs A."/>
            <person name="Bhullar B."/>
            <person name="Murthy T.V.S."/>
            <person name="Zhu C."/>
            <person name="Berger M.F."/>
            <person name="Camargo A.A."/>
            <person name="Kelley F."/>
            <person name="McCarron S."/>
            <person name="Jepson D."/>
            <person name="Richardson A."/>
            <person name="Raphael J."/>
            <person name="Moreira D."/>
            <person name="Taycher E."/>
            <person name="Zuo D."/>
            <person name="Mohr S."/>
            <person name="Kane M.F."/>
            <person name="Williamson J."/>
            <person name="Simpson A.J.G."/>
            <person name="Bulyk M.L."/>
            <person name="Harlow E."/>
            <person name="Marsischky G."/>
            <person name="Kolodner R.D."/>
            <person name="LaBaer J."/>
        </authorList>
    </citation>
    <scope>NUCLEOTIDE SEQUENCE [GENOMIC DNA]</scope>
    <source>
        <strain>ATCC 204508 / S288c</strain>
    </source>
</reference>
<reference key="4">
    <citation type="journal article" date="1998" name="Mol. Cell. Biol.">
        <title>Global regulatory functions of Oaf1p and Pip2p (Oaf2p), transcription factors that regulate genes encoding peroxisomal proteins in Saccharomyces cerevisiae.</title>
        <authorList>
            <person name="Karpichev I.V."/>
            <person name="Small G.M."/>
        </authorList>
    </citation>
    <scope>INDUCTION</scope>
</reference>
<reference key="5">
    <citation type="journal article" date="1999" name="Biochem. Biophys. Res. Commun.">
        <title>Preliminary characterization of Yor180Cp: identification of a novel peroxisomal protein of Saccharomyces cerevisiae involved in fatty acid metabolism.</title>
        <authorList>
            <person name="Geisbrecht B.V."/>
            <person name="Schulz K."/>
            <person name="Nau K."/>
            <person name="Geraghty M.T."/>
            <person name="Schulz H."/>
            <person name="Erdmann R."/>
            <person name="Gould S.J."/>
        </authorList>
    </citation>
    <scope>SUBCELLULAR LOCATION</scope>
    <scope>FUNCTION</scope>
    <scope>INTERACTION WITH ECI1</scope>
</reference>
<reference key="6">
    <citation type="journal article" date="1999" name="J. Biol. Chem.">
        <title>Alternatives to the isomerase-dependent pathway for the beta-oxidation of oleic acid are dispensable in Saccharomyces cerevisiae. Identification of YOR180c/DCI1 encoding peroxisomal delta(3,5)-delta(2,4)-dienoyl-CoA isomerase.</title>
        <authorList>
            <person name="Gurvitz A."/>
            <person name="Mursula A.M."/>
            <person name="Yagi A.I."/>
            <person name="Hartig A."/>
            <person name="Ruis H."/>
            <person name="Rottensteiner H."/>
            <person name="Hiltunen J.K."/>
        </authorList>
    </citation>
    <scope>INDUCTION</scope>
    <scope>SUBCELLULAR LOCATION</scope>
    <scope>FUNCTION</scope>
    <scope>CATALYTIC ACTIVITY</scope>
</reference>
<reference key="7">
    <citation type="journal article" date="2000" name="J. Cell Sci.">
        <title>Evidence for a novel pathway for the targeting of a Saccharomyces cerevisiae peroxisomal protein belonging to the isomerase/hydratase family.</title>
        <authorList>
            <person name="Karpichev I.V."/>
            <person name="Small G.M."/>
        </authorList>
    </citation>
    <scope>INDUCTION</scope>
    <scope>SUBCELLULAR LOCATION</scope>
    <scope>DOMAIN</scope>
</reference>
<reference key="8">
    <citation type="journal article" date="2001" name="Eur. J. Cell Biol.">
        <title>Eci1p uses a PTS1 to enter peroxisomes: either its own or that of a partner, Dci1p.</title>
        <authorList>
            <person name="Yang X."/>
            <person name="Purdue P.E."/>
            <person name="Lazarow P.B."/>
        </authorList>
    </citation>
    <scope>FUNCTION</scope>
    <scope>DOMAIN</scope>
</reference>
<reference key="9">
    <citation type="journal article" date="2002" name="Mol. Biol. Cell">
        <title>Ammonia pulses and metabolic oscillations guide yeast colony development.</title>
        <authorList>
            <person name="Palkova Z."/>
            <person name="Devaux F."/>
            <person name="Icicova M."/>
            <person name="Minarikova L."/>
            <person name="Le Crom S."/>
            <person name="Jacq C."/>
        </authorList>
    </citation>
    <scope>INDUCTION</scope>
</reference>
<sequence>MSSRVCYHINGPFFIIKLIDPKHLNSLTFEDFVYIALLLHKANDIDSVLFTVLQSSGKYFSSGGKFSAVNKLNDGDVTSEVEKVSKLVSAISSPNIFVANAFAIHKKVLVCCLNGPAIGLSASLVALCDIVYSQNDSVFLLFPFSNLGFVAEVGTSVTLTQKLGINSANEHMIFSTPVLFKELIGTIITKNYQLTNTETFNEKVLQDIKQNLEGLYPKSVLGMKELLHSEMKQKLIKAQAMETNGTLPFWASGEPFKRFKQLQEGNRRHKL</sequence>
<gene>
    <name evidence="8" type="primary">DCI1</name>
    <name type="synonym">ECI2</name>
    <name type="synonym">EHD2</name>
    <name type="ordered locus">YOR180C</name>
</gene>